<sequence>MSSGKIAQVIGPVVDVLFAAGEKLPEINNALVVYKNDERKTKIVLEVALELGDGMVRTIAMESTDGLTRGMEVLDTGRPISVPVGKETLGRVFNVLGDTIDLEAPFTEDAERQPIHKKAPTFDELSTSSEILETGIKVIDLLAPYLKGGKVGLFGGAGVGKTVLIQELIHNIAQEHGGISVFAGVGERTREGNDLYWEMKESGVIEKTAMVFGQMNEPPGARMRVALTGLTIAEYFRDVEGQDVLLFIDNIFRFTQAGSEVSALLGRMPSAVGYQPTLATEMGQLQERITSTKKGSVTSIQAIYVPADDYTDPAPATAFAHLDSTTNLERKLVQLGIYPAVDPLASSSRALAPEIVGEEHYAVAAEVKRVLQRYHELQDIIAILGMDELSDEEKTLVARARRIQFFLSQNFNVAEQFTGQPGSYVPVAETVRGFKEILDGKYDHLPEDAFRGVGSIEDVIAKAEKMGF</sequence>
<reference key="1">
    <citation type="journal article" date="2001" name="Science">
        <title>Complete genome sequence of a virulent isolate of Streptococcus pneumoniae.</title>
        <authorList>
            <person name="Tettelin H."/>
            <person name="Nelson K.E."/>
            <person name="Paulsen I.T."/>
            <person name="Eisen J.A."/>
            <person name="Read T.D."/>
            <person name="Peterson S.N."/>
            <person name="Heidelberg J.F."/>
            <person name="DeBoy R.T."/>
            <person name="Haft D.H."/>
            <person name="Dodson R.J."/>
            <person name="Durkin A.S."/>
            <person name="Gwinn M.L."/>
            <person name="Kolonay J.F."/>
            <person name="Nelson W.C."/>
            <person name="Peterson J.D."/>
            <person name="Umayam L.A."/>
            <person name="White O."/>
            <person name="Salzberg S.L."/>
            <person name="Lewis M.R."/>
            <person name="Radune D."/>
            <person name="Holtzapple E.K."/>
            <person name="Khouri H.M."/>
            <person name="Wolf A.M."/>
            <person name="Utterback T.R."/>
            <person name="Hansen C.L."/>
            <person name="McDonald L.A."/>
            <person name="Feldblyum T.V."/>
            <person name="Angiuoli S.V."/>
            <person name="Dickinson T."/>
            <person name="Hickey E.K."/>
            <person name="Holt I.E."/>
            <person name="Loftus B.J."/>
            <person name="Yang F."/>
            <person name="Smith H.O."/>
            <person name="Venter J.C."/>
            <person name="Dougherty B.A."/>
            <person name="Morrison D.A."/>
            <person name="Hollingshead S.K."/>
            <person name="Fraser C.M."/>
        </authorList>
    </citation>
    <scope>NUCLEOTIDE SEQUENCE [LARGE SCALE GENOMIC DNA]</scope>
    <source>
        <strain>ATCC BAA-334 / TIGR4</strain>
    </source>
</reference>
<organism>
    <name type="scientific">Streptococcus pneumoniae serotype 4 (strain ATCC BAA-334 / TIGR4)</name>
    <dbReference type="NCBI Taxonomy" id="170187"/>
    <lineage>
        <taxon>Bacteria</taxon>
        <taxon>Bacillati</taxon>
        <taxon>Bacillota</taxon>
        <taxon>Bacilli</taxon>
        <taxon>Lactobacillales</taxon>
        <taxon>Streptococcaceae</taxon>
        <taxon>Streptococcus</taxon>
    </lineage>
</organism>
<accession>Q97PT6</accession>
<name>ATPB_STRPN</name>
<proteinExistence type="inferred from homology"/>
<evidence type="ECO:0000255" key="1">
    <source>
        <dbReference type="HAMAP-Rule" id="MF_01347"/>
    </source>
</evidence>
<feature type="chain" id="PRO_0000254389" description="ATP synthase subunit beta">
    <location>
        <begin position="1"/>
        <end position="468"/>
    </location>
</feature>
<feature type="binding site" evidence="1">
    <location>
        <begin position="155"/>
        <end position="162"/>
    </location>
    <ligand>
        <name>ATP</name>
        <dbReference type="ChEBI" id="CHEBI:30616"/>
    </ligand>
</feature>
<dbReference type="EC" id="7.1.2.2" evidence="1"/>
<dbReference type="EMBL" id="AE005672">
    <property type="protein sequence ID" value="AAK75599.1"/>
    <property type="molecule type" value="Genomic_DNA"/>
</dbReference>
<dbReference type="PIR" id="F95175">
    <property type="entry name" value="F95175"/>
</dbReference>
<dbReference type="PIR" id="G98041">
    <property type="entry name" value="G98041"/>
</dbReference>
<dbReference type="RefSeq" id="WP_000094354.1">
    <property type="nucleotide sequence ID" value="NZ_CP155539.1"/>
</dbReference>
<dbReference type="SMR" id="Q97PT6"/>
<dbReference type="PaxDb" id="170187-SP_1508"/>
<dbReference type="EnsemblBacteria" id="AAK75599">
    <property type="protein sequence ID" value="AAK75599"/>
    <property type="gene ID" value="SP_1508"/>
</dbReference>
<dbReference type="KEGG" id="spn:SP_1508"/>
<dbReference type="eggNOG" id="COG0055">
    <property type="taxonomic scope" value="Bacteria"/>
</dbReference>
<dbReference type="PhylomeDB" id="Q97PT6"/>
<dbReference type="BioCyc" id="SPNE170187:G1FZB-1524-MONOMER"/>
<dbReference type="Proteomes" id="UP000000585">
    <property type="component" value="Chromosome"/>
</dbReference>
<dbReference type="GO" id="GO:0005886">
    <property type="term" value="C:plasma membrane"/>
    <property type="evidence" value="ECO:0007669"/>
    <property type="project" value="UniProtKB-SubCell"/>
</dbReference>
<dbReference type="GO" id="GO:0045259">
    <property type="term" value="C:proton-transporting ATP synthase complex"/>
    <property type="evidence" value="ECO:0007669"/>
    <property type="project" value="UniProtKB-KW"/>
</dbReference>
<dbReference type="GO" id="GO:0005524">
    <property type="term" value="F:ATP binding"/>
    <property type="evidence" value="ECO:0007669"/>
    <property type="project" value="UniProtKB-UniRule"/>
</dbReference>
<dbReference type="GO" id="GO:0016887">
    <property type="term" value="F:ATP hydrolysis activity"/>
    <property type="evidence" value="ECO:0007669"/>
    <property type="project" value="InterPro"/>
</dbReference>
<dbReference type="GO" id="GO:0046933">
    <property type="term" value="F:proton-transporting ATP synthase activity, rotational mechanism"/>
    <property type="evidence" value="ECO:0007669"/>
    <property type="project" value="UniProtKB-UniRule"/>
</dbReference>
<dbReference type="CDD" id="cd18110">
    <property type="entry name" value="ATP-synt_F1_beta_C"/>
    <property type="match status" value="1"/>
</dbReference>
<dbReference type="CDD" id="cd18115">
    <property type="entry name" value="ATP-synt_F1_beta_N"/>
    <property type="match status" value="1"/>
</dbReference>
<dbReference type="CDD" id="cd01133">
    <property type="entry name" value="F1-ATPase_beta_CD"/>
    <property type="match status" value="1"/>
</dbReference>
<dbReference type="FunFam" id="1.10.1140.10:FF:000001">
    <property type="entry name" value="ATP synthase subunit beta"/>
    <property type="match status" value="1"/>
</dbReference>
<dbReference type="FunFam" id="2.40.10.170:FF:000005">
    <property type="entry name" value="ATP synthase subunit beta"/>
    <property type="match status" value="1"/>
</dbReference>
<dbReference type="FunFam" id="3.40.50.300:FF:000004">
    <property type="entry name" value="ATP synthase subunit beta"/>
    <property type="match status" value="1"/>
</dbReference>
<dbReference type="Gene3D" id="2.40.10.170">
    <property type="match status" value="1"/>
</dbReference>
<dbReference type="Gene3D" id="1.10.1140.10">
    <property type="entry name" value="Bovine Mitochondrial F1-atpase, Atp Synthase Beta Chain, Chain D, domain 3"/>
    <property type="match status" value="1"/>
</dbReference>
<dbReference type="Gene3D" id="3.40.50.300">
    <property type="entry name" value="P-loop containing nucleotide triphosphate hydrolases"/>
    <property type="match status" value="1"/>
</dbReference>
<dbReference type="HAMAP" id="MF_01347">
    <property type="entry name" value="ATP_synth_beta_bact"/>
    <property type="match status" value="1"/>
</dbReference>
<dbReference type="InterPro" id="IPR003593">
    <property type="entry name" value="AAA+_ATPase"/>
</dbReference>
<dbReference type="InterPro" id="IPR055190">
    <property type="entry name" value="ATP-synt_VA_C"/>
</dbReference>
<dbReference type="InterPro" id="IPR005722">
    <property type="entry name" value="ATP_synth_F1_bsu"/>
</dbReference>
<dbReference type="InterPro" id="IPR020003">
    <property type="entry name" value="ATPase_a/bsu_AS"/>
</dbReference>
<dbReference type="InterPro" id="IPR050053">
    <property type="entry name" value="ATPase_alpha/beta_chains"/>
</dbReference>
<dbReference type="InterPro" id="IPR004100">
    <property type="entry name" value="ATPase_F1/V1/A1_a/bsu_N"/>
</dbReference>
<dbReference type="InterPro" id="IPR036121">
    <property type="entry name" value="ATPase_F1/V1/A1_a/bsu_N_sf"/>
</dbReference>
<dbReference type="InterPro" id="IPR000194">
    <property type="entry name" value="ATPase_F1/V1/A1_a/bsu_nucl-bd"/>
</dbReference>
<dbReference type="InterPro" id="IPR024034">
    <property type="entry name" value="ATPase_F1/V1_b/a_C"/>
</dbReference>
<dbReference type="InterPro" id="IPR027417">
    <property type="entry name" value="P-loop_NTPase"/>
</dbReference>
<dbReference type="NCBIfam" id="TIGR01039">
    <property type="entry name" value="atpD"/>
    <property type="match status" value="1"/>
</dbReference>
<dbReference type="PANTHER" id="PTHR15184">
    <property type="entry name" value="ATP SYNTHASE"/>
    <property type="match status" value="1"/>
</dbReference>
<dbReference type="PANTHER" id="PTHR15184:SF71">
    <property type="entry name" value="ATP SYNTHASE SUBUNIT BETA, MITOCHONDRIAL"/>
    <property type="match status" value="1"/>
</dbReference>
<dbReference type="Pfam" id="PF00006">
    <property type="entry name" value="ATP-synt_ab"/>
    <property type="match status" value="1"/>
</dbReference>
<dbReference type="Pfam" id="PF02874">
    <property type="entry name" value="ATP-synt_ab_N"/>
    <property type="match status" value="1"/>
</dbReference>
<dbReference type="Pfam" id="PF22919">
    <property type="entry name" value="ATP-synt_VA_C"/>
    <property type="match status" value="1"/>
</dbReference>
<dbReference type="SMART" id="SM00382">
    <property type="entry name" value="AAA"/>
    <property type="match status" value="1"/>
</dbReference>
<dbReference type="SUPFAM" id="SSF47917">
    <property type="entry name" value="C-terminal domain of alpha and beta subunits of F1 ATP synthase"/>
    <property type="match status" value="1"/>
</dbReference>
<dbReference type="SUPFAM" id="SSF50615">
    <property type="entry name" value="N-terminal domain of alpha and beta subunits of F1 ATP synthase"/>
    <property type="match status" value="1"/>
</dbReference>
<dbReference type="SUPFAM" id="SSF52540">
    <property type="entry name" value="P-loop containing nucleoside triphosphate hydrolases"/>
    <property type="match status" value="1"/>
</dbReference>
<dbReference type="PROSITE" id="PS00152">
    <property type="entry name" value="ATPASE_ALPHA_BETA"/>
    <property type="match status" value="1"/>
</dbReference>
<keyword id="KW-0066">ATP synthesis</keyword>
<keyword id="KW-0067">ATP-binding</keyword>
<keyword id="KW-1003">Cell membrane</keyword>
<keyword id="KW-0139">CF(1)</keyword>
<keyword id="KW-0375">Hydrogen ion transport</keyword>
<keyword id="KW-0406">Ion transport</keyword>
<keyword id="KW-0472">Membrane</keyword>
<keyword id="KW-0547">Nucleotide-binding</keyword>
<keyword id="KW-1185">Reference proteome</keyword>
<keyword id="KW-1278">Translocase</keyword>
<keyword id="KW-0813">Transport</keyword>
<protein>
    <recommendedName>
        <fullName evidence="1">ATP synthase subunit beta</fullName>
        <ecNumber evidence="1">7.1.2.2</ecNumber>
    </recommendedName>
    <alternativeName>
        <fullName evidence="1">ATP synthase F1 sector subunit beta</fullName>
    </alternativeName>
    <alternativeName>
        <fullName evidence="1">F-ATPase subunit beta</fullName>
    </alternativeName>
</protein>
<comment type="function">
    <text evidence="1">Produces ATP from ADP in the presence of a proton gradient across the membrane. The catalytic sites are hosted primarily by the beta subunits.</text>
</comment>
<comment type="catalytic activity">
    <reaction evidence="1">
        <text>ATP + H2O + 4 H(+)(in) = ADP + phosphate + 5 H(+)(out)</text>
        <dbReference type="Rhea" id="RHEA:57720"/>
        <dbReference type="ChEBI" id="CHEBI:15377"/>
        <dbReference type="ChEBI" id="CHEBI:15378"/>
        <dbReference type="ChEBI" id="CHEBI:30616"/>
        <dbReference type="ChEBI" id="CHEBI:43474"/>
        <dbReference type="ChEBI" id="CHEBI:456216"/>
        <dbReference type="EC" id="7.1.2.2"/>
    </reaction>
</comment>
<comment type="subunit">
    <text evidence="1">F-type ATPases have 2 components, CF(1) - the catalytic core - and CF(0) - the membrane proton channel. CF(1) has five subunits: alpha(3), beta(3), gamma(1), delta(1), epsilon(1). CF(0) has three main subunits: a(1), b(2) and c(9-12). The alpha and beta chains form an alternating ring which encloses part of the gamma chain. CF(1) is attached to CF(0) by a central stalk formed by the gamma and epsilon chains, while a peripheral stalk is formed by the delta and b chains.</text>
</comment>
<comment type="subcellular location">
    <subcellularLocation>
        <location evidence="1">Cell membrane</location>
        <topology evidence="1">Peripheral membrane protein</topology>
    </subcellularLocation>
</comment>
<comment type="similarity">
    <text evidence="1">Belongs to the ATPase alpha/beta chains family.</text>
</comment>
<gene>
    <name evidence="1" type="primary">atpD</name>
    <name type="ordered locus">SP_1508</name>
</gene>